<keyword id="KW-0001">2Fe-2S</keyword>
<keyword id="KW-0903">Direct protein sequencing</keyword>
<keyword id="KW-0249">Electron transport</keyword>
<keyword id="KW-0408">Iron</keyword>
<keyword id="KW-0411">Iron-sulfur</keyword>
<keyword id="KW-0479">Metal-binding</keyword>
<keyword id="KW-0813">Transport</keyword>
<proteinExistence type="evidence at protein level"/>
<organism>
    <name type="scientific">Parathermosynechococcus lividus</name>
    <name type="common">Thermostichus lividus</name>
    <dbReference type="NCBI Taxonomy" id="33070"/>
    <lineage>
        <taxon>Bacteria</taxon>
        <taxon>Bacillati</taxon>
        <taxon>Cyanobacteriota</taxon>
        <taxon>Cyanophyceae</taxon>
        <taxon>Acaryochloridales</taxon>
        <taxon>Thermosynechococcaceae</taxon>
        <taxon>Parathermosynechococcus</taxon>
    </lineage>
</organism>
<evidence type="ECO:0000255" key="1">
    <source>
        <dbReference type="PROSITE-ProRule" id="PRU00465"/>
    </source>
</evidence>
<evidence type="ECO:0000269" key="2">
    <source ref="1"/>
</evidence>
<evidence type="ECO:0000305" key="3"/>
<name>FER_PARLV</name>
<accession>P00255</accession>
<reference key="1">
    <citation type="submission" date="1979-12" db="PIR data bank">
        <authorList>
            <person name="Borden D."/>
            <person name="Margoliash E."/>
        </authorList>
    </citation>
    <scope>PROTEIN SEQUENCE OF 2-97</scope>
</reference>
<sequence>MATYKVTLVRPDGETTIDVPEDEYILDVAEEQGLDLPFSCRAGACSTCAGKLLEGEVDQSDQSFLDDDQIEKGFVLTCVAYPRSDCKILTHQEEELY</sequence>
<dbReference type="PIR" id="A00258">
    <property type="entry name" value="FEYCAL"/>
</dbReference>
<dbReference type="SMR" id="P00255"/>
<dbReference type="GO" id="GO:0051537">
    <property type="term" value="F:2 iron, 2 sulfur cluster binding"/>
    <property type="evidence" value="ECO:0007669"/>
    <property type="project" value="UniProtKB-KW"/>
</dbReference>
<dbReference type="GO" id="GO:0009055">
    <property type="term" value="F:electron transfer activity"/>
    <property type="evidence" value="ECO:0007669"/>
    <property type="project" value="InterPro"/>
</dbReference>
<dbReference type="GO" id="GO:0046872">
    <property type="term" value="F:metal ion binding"/>
    <property type="evidence" value="ECO:0007669"/>
    <property type="project" value="UniProtKB-KW"/>
</dbReference>
<dbReference type="GO" id="GO:0022900">
    <property type="term" value="P:electron transport chain"/>
    <property type="evidence" value="ECO:0007669"/>
    <property type="project" value="InterPro"/>
</dbReference>
<dbReference type="CDD" id="cd00207">
    <property type="entry name" value="fer2"/>
    <property type="match status" value="1"/>
</dbReference>
<dbReference type="FunFam" id="3.10.20.30:FF:000014">
    <property type="entry name" value="Ferredoxin"/>
    <property type="match status" value="1"/>
</dbReference>
<dbReference type="Gene3D" id="3.10.20.30">
    <property type="match status" value="1"/>
</dbReference>
<dbReference type="InterPro" id="IPR036010">
    <property type="entry name" value="2Fe-2S_ferredoxin-like_sf"/>
</dbReference>
<dbReference type="InterPro" id="IPR001041">
    <property type="entry name" value="2Fe-2S_ferredoxin-type"/>
</dbReference>
<dbReference type="InterPro" id="IPR006058">
    <property type="entry name" value="2Fe2S_fd_BS"/>
</dbReference>
<dbReference type="InterPro" id="IPR012675">
    <property type="entry name" value="Beta-grasp_dom_sf"/>
</dbReference>
<dbReference type="InterPro" id="IPR010241">
    <property type="entry name" value="Fd_pln"/>
</dbReference>
<dbReference type="NCBIfam" id="TIGR02008">
    <property type="entry name" value="fdx_plant"/>
    <property type="match status" value="1"/>
</dbReference>
<dbReference type="PANTHER" id="PTHR43112">
    <property type="entry name" value="FERREDOXIN"/>
    <property type="match status" value="1"/>
</dbReference>
<dbReference type="PANTHER" id="PTHR43112:SF3">
    <property type="entry name" value="FERREDOXIN-2, CHLOROPLASTIC"/>
    <property type="match status" value="1"/>
</dbReference>
<dbReference type="Pfam" id="PF00111">
    <property type="entry name" value="Fer2"/>
    <property type="match status" value="1"/>
</dbReference>
<dbReference type="SUPFAM" id="SSF54292">
    <property type="entry name" value="2Fe-2S ferredoxin-like"/>
    <property type="match status" value="1"/>
</dbReference>
<dbReference type="PROSITE" id="PS00197">
    <property type="entry name" value="2FE2S_FER_1"/>
    <property type="match status" value="1"/>
</dbReference>
<dbReference type="PROSITE" id="PS51085">
    <property type="entry name" value="2FE2S_FER_2"/>
    <property type="match status" value="1"/>
</dbReference>
<protein>
    <recommendedName>
        <fullName>Ferredoxin</fullName>
    </recommendedName>
</protein>
<comment type="function">
    <text>Ferredoxins are iron-sulfur proteins that transfer electrons in a wide variety of metabolic reactions.</text>
</comment>
<comment type="cofactor">
    <cofactor>
        <name>[2Fe-2S] cluster</name>
        <dbReference type="ChEBI" id="CHEBI:190135"/>
    </cofactor>
    <text>Binds 1 [2Fe-2S] cluster.</text>
</comment>
<comment type="similarity">
    <text evidence="3">Belongs to the 2Fe2S plant-type ferredoxin family.</text>
</comment>
<feature type="initiator methionine" description="Removed" evidence="2">
    <location>
        <position position="1"/>
    </location>
</feature>
<feature type="chain" id="PRO_0000189375" description="Ferredoxin">
    <location>
        <begin position="2"/>
        <end position="97"/>
    </location>
</feature>
<feature type="domain" description="2Fe-2S ferredoxin-type" evidence="1">
    <location>
        <begin position="4"/>
        <end position="94"/>
    </location>
</feature>
<feature type="binding site" evidence="1">
    <location>
        <position position="40"/>
    </location>
    <ligand>
        <name>[2Fe-2S] cluster</name>
        <dbReference type="ChEBI" id="CHEBI:190135"/>
    </ligand>
</feature>
<feature type="binding site" evidence="1">
    <location>
        <position position="45"/>
    </location>
    <ligand>
        <name>[2Fe-2S] cluster</name>
        <dbReference type="ChEBI" id="CHEBI:190135"/>
    </ligand>
</feature>
<feature type="binding site" evidence="1">
    <location>
        <position position="48"/>
    </location>
    <ligand>
        <name>[2Fe-2S] cluster</name>
        <dbReference type="ChEBI" id="CHEBI:190135"/>
    </ligand>
</feature>
<feature type="binding site" evidence="1">
    <location>
        <position position="78"/>
    </location>
    <ligand>
        <name>[2Fe-2S] cluster</name>
        <dbReference type="ChEBI" id="CHEBI:190135"/>
    </ligand>
</feature>